<comment type="function">
    <text evidence="1">Catalyzes the anti-1,4-elimination of the C-3 phosphate and the C-6 proR hydrogen from 5-enolpyruvylshikimate-3-phosphate (EPSP) to yield chorismate, which is the branch point compound that serves as the starting substrate for the three terminal pathways of aromatic amino acid biosynthesis. This reaction introduces a second double bond into the aromatic ring system.</text>
</comment>
<comment type="catalytic activity">
    <reaction evidence="1">
        <text>5-O-(1-carboxyvinyl)-3-phosphoshikimate = chorismate + phosphate</text>
        <dbReference type="Rhea" id="RHEA:21020"/>
        <dbReference type="ChEBI" id="CHEBI:29748"/>
        <dbReference type="ChEBI" id="CHEBI:43474"/>
        <dbReference type="ChEBI" id="CHEBI:57701"/>
        <dbReference type="EC" id="4.2.3.5"/>
    </reaction>
</comment>
<comment type="cofactor">
    <cofactor evidence="1">
        <name>FMNH2</name>
        <dbReference type="ChEBI" id="CHEBI:57618"/>
    </cofactor>
    <text evidence="1">Reduced FMN (FMNH(2)).</text>
</comment>
<comment type="pathway">
    <text evidence="1">Metabolic intermediate biosynthesis; chorismate biosynthesis; chorismate from D-erythrose 4-phosphate and phosphoenolpyruvate: step 7/7.</text>
</comment>
<comment type="subunit">
    <text evidence="1">Homotetramer.</text>
</comment>
<comment type="similarity">
    <text evidence="1">Belongs to the chorismate synthase family.</text>
</comment>
<gene>
    <name evidence="1" type="primary">aroC</name>
    <name type="ordered locus">AFE_1972</name>
</gene>
<evidence type="ECO:0000255" key="1">
    <source>
        <dbReference type="HAMAP-Rule" id="MF_00300"/>
    </source>
</evidence>
<proteinExistence type="inferred from homology"/>
<reference key="1">
    <citation type="journal article" date="2008" name="BMC Genomics">
        <title>Acidithiobacillus ferrooxidans metabolism: from genome sequence to industrial applications.</title>
        <authorList>
            <person name="Valdes J."/>
            <person name="Pedroso I."/>
            <person name="Quatrini R."/>
            <person name="Dodson R.J."/>
            <person name="Tettelin H."/>
            <person name="Blake R. II"/>
            <person name="Eisen J.A."/>
            <person name="Holmes D.S."/>
        </authorList>
    </citation>
    <scope>NUCLEOTIDE SEQUENCE [LARGE SCALE GENOMIC DNA]</scope>
    <source>
        <strain>ATCC 23270 / DSM 14882 / CIP 104768 / NCIMB 8455</strain>
    </source>
</reference>
<name>AROC_ACIF2</name>
<protein>
    <recommendedName>
        <fullName evidence="1">Chorismate synthase</fullName>
        <shortName evidence="1">CS</shortName>
        <ecNumber evidence="1">4.2.3.5</ecNumber>
    </recommendedName>
    <alternativeName>
        <fullName evidence="1">5-enolpyruvylshikimate-3-phosphate phospholyase</fullName>
    </alternativeName>
</protein>
<feature type="chain" id="PRO_1000119484" description="Chorismate synthase">
    <location>
        <begin position="1"/>
        <end position="363"/>
    </location>
</feature>
<feature type="binding site" evidence="1">
    <location>
        <position position="48"/>
    </location>
    <ligand>
        <name>NADP(+)</name>
        <dbReference type="ChEBI" id="CHEBI:58349"/>
    </ligand>
</feature>
<feature type="binding site" evidence="1">
    <location>
        <position position="54"/>
    </location>
    <ligand>
        <name>NADP(+)</name>
        <dbReference type="ChEBI" id="CHEBI:58349"/>
    </ligand>
</feature>
<feature type="binding site" evidence="1">
    <location>
        <begin position="125"/>
        <end position="127"/>
    </location>
    <ligand>
        <name>FMN</name>
        <dbReference type="ChEBI" id="CHEBI:58210"/>
    </ligand>
</feature>
<feature type="binding site" evidence="1">
    <location>
        <begin position="238"/>
        <end position="239"/>
    </location>
    <ligand>
        <name>FMN</name>
        <dbReference type="ChEBI" id="CHEBI:58210"/>
    </ligand>
</feature>
<feature type="binding site" evidence="1">
    <location>
        <position position="278"/>
    </location>
    <ligand>
        <name>FMN</name>
        <dbReference type="ChEBI" id="CHEBI:58210"/>
    </ligand>
</feature>
<feature type="binding site" evidence="1">
    <location>
        <begin position="293"/>
        <end position="297"/>
    </location>
    <ligand>
        <name>FMN</name>
        <dbReference type="ChEBI" id="CHEBI:58210"/>
    </ligand>
</feature>
<feature type="binding site" evidence="1">
    <location>
        <position position="319"/>
    </location>
    <ligand>
        <name>FMN</name>
        <dbReference type="ChEBI" id="CHEBI:58210"/>
    </ligand>
</feature>
<organism>
    <name type="scientific">Acidithiobacillus ferrooxidans (strain ATCC 23270 / DSM 14882 / CIP 104768 / NCIMB 8455)</name>
    <name type="common">Ferrobacillus ferrooxidans (strain ATCC 23270)</name>
    <dbReference type="NCBI Taxonomy" id="243159"/>
    <lineage>
        <taxon>Bacteria</taxon>
        <taxon>Pseudomonadati</taxon>
        <taxon>Pseudomonadota</taxon>
        <taxon>Acidithiobacillia</taxon>
        <taxon>Acidithiobacillales</taxon>
        <taxon>Acidithiobacillaceae</taxon>
        <taxon>Acidithiobacillus</taxon>
    </lineage>
</organism>
<accession>B7JC67</accession>
<keyword id="KW-0028">Amino-acid biosynthesis</keyword>
<keyword id="KW-0057">Aromatic amino acid biosynthesis</keyword>
<keyword id="KW-0274">FAD</keyword>
<keyword id="KW-0285">Flavoprotein</keyword>
<keyword id="KW-0288">FMN</keyword>
<keyword id="KW-0456">Lyase</keyword>
<keyword id="KW-0521">NADP</keyword>
<keyword id="KW-1185">Reference proteome</keyword>
<sequence>MAGSSIGECFRVSTFGESHGPAIGCIVDGCPPGMTLSAADIQTELDRRRPGRSRHTTQRQEADQVEILSGVFEGLTTGTPIGLLIRNTDQRSQDYSKIKDLFRPGHADYTYLQKYGLRDYRGGGRSSARETAMRVAAGAIARKFLRERLGVNIQAWMAQMGPIHAEDFDAAEISHNDFFCPDAGAAIRMADFLDGLRKEGDSIGARVDARVSGMPVGLGEPVFDRLEADIAKAMMSINAVKAIAVGDGFAVVEQRGSYHGDAMAATGFQSNHAGGVLGGISSGQDLTLSVAIKPTSSIRIPRQSIDVHGRPAEVITTGRHDPCVGIRAVPIVEAMLALVIMDHWMRHRAQNADVQAPLPPIPA</sequence>
<dbReference type="EC" id="4.2.3.5" evidence="1"/>
<dbReference type="EMBL" id="CP001219">
    <property type="protein sequence ID" value="ACK79724.1"/>
    <property type="molecule type" value="Genomic_DNA"/>
</dbReference>
<dbReference type="RefSeq" id="WP_009562239.1">
    <property type="nucleotide sequence ID" value="NC_011761.1"/>
</dbReference>
<dbReference type="SMR" id="B7JC67"/>
<dbReference type="STRING" id="243159.AFE_1972"/>
<dbReference type="PaxDb" id="243159-AFE_1972"/>
<dbReference type="GeneID" id="65281123"/>
<dbReference type="KEGG" id="afr:AFE_1972"/>
<dbReference type="eggNOG" id="COG0082">
    <property type="taxonomic scope" value="Bacteria"/>
</dbReference>
<dbReference type="HOGENOM" id="CLU_034547_0_2_6"/>
<dbReference type="UniPathway" id="UPA00053">
    <property type="reaction ID" value="UER00090"/>
</dbReference>
<dbReference type="Proteomes" id="UP000001362">
    <property type="component" value="Chromosome"/>
</dbReference>
<dbReference type="GO" id="GO:0005829">
    <property type="term" value="C:cytosol"/>
    <property type="evidence" value="ECO:0007669"/>
    <property type="project" value="TreeGrafter"/>
</dbReference>
<dbReference type="GO" id="GO:0004107">
    <property type="term" value="F:chorismate synthase activity"/>
    <property type="evidence" value="ECO:0007669"/>
    <property type="project" value="UniProtKB-UniRule"/>
</dbReference>
<dbReference type="GO" id="GO:0010181">
    <property type="term" value="F:FMN binding"/>
    <property type="evidence" value="ECO:0007669"/>
    <property type="project" value="TreeGrafter"/>
</dbReference>
<dbReference type="GO" id="GO:0008652">
    <property type="term" value="P:amino acid biosynthetic process"/>
    <property type="evidence" value="ECO:0007669"/>
    <property type="project" value="UniProtKB-KW"/>
</dbReference>
<dbReference type="GO" id="GO:0009073">
    <property type="term" value="P:aromatic amino acid family biosynthetic process"/>
    <property type="evidence" value="ECO:0007669"/>
    <property type="project" value="UniProtKB-KW"/>
</dbReference>
<dbReference type="GO" id="GO:0009423">
    <property type="term" value="P:chorismate biosynthetic process"/>
    <property type="evidence" value="ECO:0007669"/>
    <property type="project" value="UniProtKB-UniRule"/>
</dbReference>
<dbReference type="CDD" id="cd07304">
    <property type="entry name" value="Chorismate_synthase"/>
    <property type="match status" value="1"/>
</dbReference>
<dbReference type="Gene3D" id="3.60.150.10">
    <property type="entry name" value="Chorismate synthase AroC"/>
    <property type="match status" value="1"/>
</dbReference>
<dbReference type="HAMAP" id="MF_00300">
    <property type="entry name" value="Chorismate_synth"/>
    <property type="match status" value="1"/>
</dbReference>
<dbReference type="InterPro" id="IPR000453">
    <property type="entry name" value="Chorismate_synth"/>
</dbReference>
<dbReference type="InterPro" id="IPR035904">
    <property type="entry name" value="Chorismate_synth_AroC_sf"/>
</dbReference>
<dbReference type="InterPro" id="IPR020541">
    <property type="entry name" value="Chorismate_synthase_CS"/>
</dbReference>
<dbReference type="NCBIfam" id="TIGR00033">
    <property type="entry name" value="aroC"/>
    <property type="match status" value="1"/>
</dbReference>
<dbReference type="NCBIfam" id="NF003793">
    <property type="entry name" value="PRK05382.1"/>
    <property type="match status" value="1"/>
</dbReference>
<dbReference type="PANTHER" id="PTHR21085">
    <property type="entry name" value="CHORISMATE SYNTHASE"/>
    <property type="match status" value="1"/>
</dbReference>
<dbReference type="PANTHER" id="PTHR21085:SF0">
    <property type="entry name" value="CHORISMATE SYNTHASE"/>
    <property type="match status" value="1"/>
</dbReference>
<dbReference type="Pfam" id="PF01264">
    <property type="entry name" value="Chorismate_synt"/>
    <property type="match status" value="1"/>
</dbReference>
<dbReference type="PIRSF" id="PIRSF001456">
    <property type="entry name" value="Chorismate_synth"/>
    <property type="match status" value="1"/>
</dbReference>
<dbReference type="SUPFAM" id="SSF103263">
    <property type="entry name" value="Chorismate synthase, AroC"/>
    <property type="match status" value="1"/>
</dbReference>
<dbReference type="PROSITE" id="PS00787">
    <property type="entry name" value="CHORISMATE_SYNTHASE_1"/>
    <property type="match status" value="1"/>
</dbReference>
<dbReference type="PROSITE" id="PS00788">
    <property type="entry name" value="CHORISMATE_SYNTHASE_2"/>
    <property type="match status" value="1"/>
</dbReference>
<dbReference type="PROSITE" id="PS00789">
    <property type="entry name" value="CHORISMATE_SYNTHASE_3"/>
    <property type="match status" value="1"/>
</dbReference>